<feature type="chain" id="PRO_0000375708" description="Succinyl-diaminopimelate desuccinylase">
    <location>
        <begin position="1"/>
        <end position="381"/>
    </location>
</feature>
<feature type="active site" evidence="1">
    <location>
        <position position="72"/>
    </location>
</feature>
<feature type="active site" description="Proton acceptor" evidence="1">
    <location>
        <position position="136"/>
    </location>
</feature>
<feature type="binding site" evidence="1">
    <location>
        <position position="70"/>
    </location>
    <ligand>
        <name>Zn(2+)</name>
        <dbReference type="ChEBI" id="CHEBI:29105"/>
        <label>1</label>
    </ligand>
</feature>
<feature type="binding site" evidence="1">
    <location>
        <position position="103"/>
    </location>
    <ligand>
        <name>Zn(2+)</name>
        <dbReference type="ChEBI" id="CHEBI:29105"/>
        <label>1</label>
    </ligand>
</feature>
<feature type="binding site" evidence="1">
    <location>
        <position position="103"/>
    </location>
    <ligand>
        <name>Zn(2+)</name>
        <dbReference type="ChEBI" id="CHEBI:29105"/>
        <label>2</label>
    </ligand>
</feature>
<feature type="binding site" evidence="1">
    <location>
        <position position="137"/>
    </location>
    <ligand>
        <name>Zn(2+)</name>
        <dbReference type="ChEBI" id="CHEBI:29105"/>
        <label>2</label>
    </ligand>
</feature>
<feature type="binding site" evidence="1">
    <location>
        <position position="165"/>
    </location>
    <ligand>
        <name>Zn(2+)</name>
        <dbReference type="ChEBI" id="CHEBI:29105"/>
        <label>1</label>
    </ligand>
</feature>
<feature type="binding site" evidence="1">
    <location>
        <position position="354"/>
    </location>
    <ligand>
        <name>Zn(2+)</name>
        <dbReference type="ChEBI" id="CHEBI:29105"/>
        <label>2</label>
    </ligand>
</feature>
<gene>
    <name evidence="1" type="primary">dapE</name>
    <name type="ordered locus">RD1_0185</name>
</gene>
<name>DAPE_ROSDO</name>
<reference key="1">
    <citation type="journal article" date="2007" name="J. Bacteriol.">
        <title>The complete genome sequence of Roseobacter denitrificans reveals a mixotrophic rather than photosynthetic metabolism.</title>
        <authorList>
            <person name="Swingley W.D."/>
            <person name="Sadekar S."/>
            <person name="Mastrian S.D."/>
            <person name="Matthies H.J."/>
            <person name="Hao J."/>
            <person name="Ramos H."/>
            <person name="Acharya C.R."/>
            <person name="Conrad A.L."/>
            <person name="Taylor H.L."/>
            <person name="Dejesa L.C."/>
            <person name="Shah M.K."/>
            <person name="O'Huallachain M.E."/>
            <person name="Lince M.T."/>
            <person name="Blankenship R.E."/>
            <person name="Beatty J.T."/>
            <person name="Touchman J.W."/>
        </authorList>
    </citation>
    <scope>NUCLEOTIDE SEQUENCE [LARGE SCALE GENOMIC DNA]</scope>
    <source>
        <strain>ATCC 33942 / OCh 114</strain>
    </source>
</reference>
<proteinExistence type="inferred from homology"/>
<keyword id="KW-0028">Amino-acid biosynthesis</keyword>
<keyword id="KW-0170">Cobalt</keyword>
<keyword id="KW-0220">Diaminopimelate biosynthesis</keyword>
<keyword id="KW-0378">Hydrolase</keyword>
<keyword id="KW-0457">Lysine biosynthesis</keyword>
<keyword id="KW-0479">Metal-binding</keyword>
<keyword id="KW-1185">Reference proteome</keyword>
<keyword id="KW-0862">Zinc</keyword>
<protein>
    <recommendedName>
        <fullName evidence="1">Succinyl-diaminopimelate desuccinylase</fullName>
        <shortName evidence="1">SDAP desuccinylase</shortName>
        <ecNumber evidence="1">3.5.1.18</ecNumber>
    </recommendedName>
    <alternativeName>
        <fullName evidence="1">N-succinyl-LL-2,6-diaminoheptanedioate amidohydrolase</fullName>
    </alternativeName>
</protein>
<organism>
    <name type="scientific">Roseobacter denitrificans (strain ATCC 33942 / OCh 114)</name>
    <name type="common">Erythrobacter sp. (strain OCh 114)</name>
    <name type="synonym">Roseobacter denitrificans</name>
    <dbReference type="NCBI Taxonomy" id="375451"/>
    <lineage>
        <taxon>Bacteria</taxon>
        <taxon>Pseudomonadati</taxon>
        <taxon>Pseudomonadota</taxon>
        <taxon>Alphaproteobacteria</taxon>
        <taxon>Rhodobacterales</taxon>
        <taxon>Roseobacteraceae</taxon>
        <taxon>Roseobacter</taxon>
    </lineage>
</organism>
<sequence length="381" mass="40646">MPAVDPVRLTADLVRCASVTPADEGALDILHDVLSDAGFDCAWADRGGIRNLFARWGRKGHPKTFGFNGHTDVVPIGNADDWSMPPFGAEVKDGIMYGRGTTDMKSGVAAFAAAAVDFVRDTPPDGAIVLAITGDEEGDATDGTTALLAYMAAQGEQMSACLVGEPTCPDRMGEMIKIGRRGSMTAWITFIGKQGHAAYPHRACNPLPALMRLMDRLASHKLDEGTEFFDPSTLAIVTVDTGNPATNVIPASCSGTVNIRFNDAHSGASLTEWIKTELSRIEGEFGVQIDLRIKISGESFLTPPGPLSALVSKAVKAQTGIEPVLSTTGGTSDARFVKDHCPVVEFGLVGQSMHQVDEHVKTDHIVELKAIYSRILTDYFA</sequence>
<accession>Q16DM9</accession>
<dbReference type="EC" id="3.5.1.18" evidence="1"/>
<dbReference type="EMBL" id="CP000362">
    <property type="protein sequence ID" value="ABG29914.1"/>
    <property type="molecule type" value="Genomic_DNA"/>
</dbReference>
<dbReference type="RefSeq" id="WP_011566536.1">
    <property type="nucleotide sequence ID" value="NC_008209.1"/>
</dbReference>
<dbReference type="SMR" id="Q16DM9"/>
<dbReference type="STRING" id="375451.RD1_0185"/>
<dbReference type="KEGG" id="rde:RD1_0185"/>
<dbReference type="eggNOG" id="COG0624">
    <property type="taxonomic scope" value="Bacteria"/>
</dbReference>
<dbReference type="HOGENOM" id="CLU_021802_4_0_5"/>
<dbReference type="OrthoDB" id="9809784at2"/>
<dbReference type="UniPathway" id="UPA00034">
    <property type="reaction ID" value="UER00021"/>
</dbReference>
<dbReference type="Proteomes" id="UP000007029">
    <property type="component" value="Chromosome"/>
</dbReference>
<dbReference type="GO" id="GO:0008777">
    <property type="term" value="F:acetylornithine deacetylase activity"/>
    <property type="evidence" value="ECO:0007669"/>
    <property type="project" value="TreeGrafter"/>
</dbReference>
<dbReference type="GO" id="GO:0050897">
    <property type="term" value="F:cobalt ion binding"/>
    <property type="evidence" value="ECO:0007669"/>
    <property type="project" value="UniProtKB-UniRule"/>
</dbReference>
<dbReference type="GO" id="GO:0009014">
    <property type="term" value="F:succinyl-diaminopimelate desuccinylase activity"/>
    <property type="evidence" value="ECO:0007669"/>
    <property type="project" value="UniProtKB-UniRule"/>
</dbReference>
<dbReference type="GO" id="GO:0008270">
    <property type="term" value="F:zinc ion binding"/>
    <property type="evidence" value="ECO:0007669"/>
    <property type="project" value="UniProtKB-UniRule"/>
</dbReference>
<dbReference type="GO" id="GO:0019877">
    <property type="term" value="P:diaminopimelate biosynthetic process"/>
    <property type="evidence" value="ECO:0007669"/>
    <property type="project" value="UniProtKB-UniRule"/>
</dbReference>
<dbReference type="GO" id="GO:0006526">
    <property type="term" value="P:L-arginine biosynthetic process"/>
    <property type="evidence" value="ECO:0007669"/>
    <property type="project" value="TreeGrafter"/>
</dbReference>
<dbReference type="GO" id="GO:0009089">
    <property type="term" value="P:lysine biosynthetic process via diaminopimelate"/>
    <property type="evidence" value="ECO:0007669"/>
    <property type="project" value="UniProtKB-UniRule"/>
</dbReference>
<dbReference type="CDD" id="cd03891">
    <property type="entry name" value="M20_DapE_proteobac"/>
    <property type="match status" value="1"/>
</dbReference>
<dbReference type="Gene3D" id="3.30.70.360">
    <property type="match status" value="1"/>
</dbReference>
<dbReference type="Gene3D" id="3.40.630.10">
    <property type="entry name" value="Zn peptidases"/>
    <property type="match status" value="1"/>
</dbReference>
<dbReference type="HAMAP" id="MF_01690">
    <property type="entry name" value="DapE"/>
    <property type="match status" value="1"/>
</dbReference>
<dbReference type="InterPro" id="IPR001261">
    <property type="entry name" value="ArgE/DapE_CS"/>
</dbReference>
<dbReference type="InterPro" id="IPR036264">
    <property type="entry name" value="Bact_exopeptidase_dim_dom"/>
</dbReference>
<dbReference type="InterPro" id="IPR005941">
    <property type="entry name" value="DapE_proteobac"/>
</dbReference>
<dbReference type="InterPro" id="IPR002933">
    <property type="entry name" value="Peptidase_M20"/>
</dbReference>
<dbReference type="InterPro" id="IPR011650">
    <property type="entry name" value="Peptidase_M20_dimer"/>
</dbReference>
<dbReference type="InterPro" id="IPR050072">
    <property type="entry name" value="Peptidase_M20A"/>
</dbReference>
<dbReference type="NCBIfam" id="TIGR01246">
    <property type="entry name" value="dapE_proteo"/>
    <property type="match status" value="1"/>
</dbReference>
<dbReference type="NCBIfam" id="NF009557">
    <property type="entry name" value="PRK13009.1"/>
    <property type="match status" value="1"/>
</dbReference>
<dbReference type="PANTHER" id="PTHR43808">
    <property type="entry name" value="ACETYLORNITHINE DEACETYLASE"/>
    <property type="match status" value="1"/>
</dbReference>
<dbReference type="PANTHER" id="PTHR43808:SF31">
    <property type="entry name" value="N-ACETYL-L-CITRULLINE DEACETYLASE"/>
    <property type="match status" value="1"/>
</dbReference>
<dbReference type="Pfam" id="PF07687">
    <property type="entry name" value="M20_dimer"/>
    <property type="match status" value="1"/>
</dbReference>
<dbReference type="Pfam" id="PF01546">
    <property type="entry name" value="Peptidase_M20"/>
    <property type="match status" value="1"/>
</dbReference>
<dbReference type="SUPFAM" id="SSF55031">
    <property type="entry name" value="Bacterial exopeptidase dimerisation domain"/>
    <property type="match status" value="1"/>
</dbReference>
<dbReference type="SUPFAM" id="SSF53187">
    <property type="entry name" value="Zn-dependent exopeptidases"/>
    <property type="match status" value="1"/>
</dbReference>
<dbReference type="PROSITE" id="PS00759">
    <property type="entry name" value="ARGE_DAPE_CPG2_2"/>
    <property type="match status" value="1"/>
</dbReference>
<comment type="function">
    <text evidence="1">Catalyzes the hydrolysis of N-succinyl-L,L-diaminopimelic acid (SDAP), forming succinate and LL-2,6-diaminopimelate (DAP), an intermediate involved in the bacterial biosynthesis of lysine and meso-diaminopimelic acid, an essential component of bacterial cell walls.</text>
</comment>
<comment type="catalytic activity">
    <reaction evidence="1">
        <text>N-succinyl-(2S,6S)-2,6-diaminopimelate + H2O = (2S,6S)-2,6-diaminopimelate + succinate</text>
        <dbReference type="Rhea" id="RHEA:22608"/>
        <dbReference type="ChEBI" id="CHEBI:15377"/>
        <dbReference type="ChEBI" id="CHEBI:30031"/>
        <dbReference type="ChEBI" id="CHEBI:57609"/>
        <dbReference type="ChEBI" id="CHEBI:58087"/>
        <dbReference type="EC" id="3.5.1.18"/>
    </reaction>
</comment>
<comment type="cofactor">
    <cofactor evidence="1">
        <name>Zn(2+)</name>
        <dbReference type="ChEBI" id="CHEBI:29105"/>
    </cofactor>
    <cofactor evidence="1">
        <name>Co(2+)</name>
        <dbReference type="ChEBI" id="CHEBI:48828"/>
    </cofactor>
    <text evidence="1">Binds 2 Zn(2+) or Co(2+) ions per subunit.</text>
</comment>
<comment type="pathway">
    <text evidence="1">Amino-acid biosynthesis; L-lysine biosynthesis via DAP pathway; LL-2,6-diaminopimelate from (S)-tetrahydrodipicolinate (succinylase route): step 3/3.</text>
</comment>
<comment type="subunit">
    <text evidence="1">Homodimer.</text>
</comment>
<comment type="similarity">
    <text evidence="1">Belongs to the peptidase M20A family. DapE subfamily.</text>
</comment>
<evidence type="ECO:0000255" key="1">
    <source>
        <dbReference type="HAMAP-Rule" id="MF_01690"/>
    </source>
</evidence>